<protein>
    <recommendedName>
        <fullName evidence="1">Endonuclease MutS2</fullName>
        <ecNumber evidence="1">3.1.-.-</ecNumber>
    </recommendedName>
    <alternativeName>
        <fullName evidence="1">Ribosome-associated protein quality control-upstream factor</fullName>
        <shortName evidence="1">RQC-upstream factor</shortName>
        <shortName evidence="1">RqcU</shortName>
        <ecNumber evidence="1">3.6.4.-</ecNumber>
    </alternativeName>
</protein>
<accession>Q5LY40</accession>
<proteinExistence type="inferred from homology"/>
<feature type="chain" id="PRO_1000093405" description="Endonuclease MutS2">
    <location>
        <begin position="1"/>
        <end position="783"/>
    </location>
</feature>
<feature type="domain" description="Smr" evidence="1">
    <location>
        <begin position="708"/>
        <end position="783"/>
    </location>
</feature>
<feature type="binding site" evidence="1">
    <location>
        <begin position="328"/>
        <end position="335"/>
    </location>
    <ligand>
        <name>ATP</name>
        <dbReference type="ChEBI" id="CHEBI:30616"/>
    </ligand>
</feature>
<keyword id="KW-0067">ATP-binding</keyword>
<keyword id="KW-0238">DNA-binding</keyword>
<keyword id="KW-0255">Endonuclease</keyword>
<keyword id="KW-0378">Hydrolase</keyword>
<keyword id="KW-0540">Nuclease</keyword>
<keyword id="KW-0547">Nucleotide-binding</keyword>
<keyword id="KW-0694">RNA-binding</keyword>
<keyword id="KW-0699">rRNA-binding</keyword>
<reference key="1">
    <citation type="journal article" date="2004" name="Nat. Biotechnol.">
        <title>Complete sequence and comparative genome analysis of the dairy bacterium Streptococcus thermophilus.</title>
        <authorList>
            <person name="Bolotin A."/>
            <person name="Quinquis B."/>
            <person name="Renault P."/>
            <person name="Sorokin A."/>
            <person name="Ehrlich S.D."/>
            <person name="Kulakauskas S."/>
            <person name="Lapidus A."/>
            <person name="Goltsman E."/>
            <person name="Mazur M."/>
            <person name="Pusch G.D."/>
            <person name="Fonstein M."/>
            <person name="Overbeek R."/>
            <person name="Kyprides N."/>
            <person name="Purnelle B."/>
            <person name="Prozzi D."/>
            <person name="Ngui K."/>
            <person name="Masuy D."/>
            <person name="Hancy F."/>
            <person name="Burteau S."/>
            <person name="Boutry M."/>
            <person name="Delcour J."/>
            <person name="Goffeau A."/>
            <person name="Hols P."/>
        </authorList>
    </citation>
    <scope>NUCLEOTIDE SEQUENCE [LARGE SCALE GENOMIC DNA]</scope>
    <source>
        <strain>CNRZ 1066</strain>
    </source>
</reference>
<dbReference type="EC" id="3.1.-.-" evidence="1"/>
<dbReference type="EC" id="3.6.4.-" evidence="1"/>
<dbReference type="EMBL" id="CP000024">
    <property type="protein sequence ID" value="AAV63280.1"/>
    <property type="molecule type" value="Genomic_DNA"/>
</dbReference>
<dbReference type="RefSeq" id="WP_011227556.1">
    <property type="nucleotide sequence ID" value="NC_006449.1"/>
</dbReference>
<dbReference type="SMR" id="Q5LY40"/>
<dbReference type="KEGG" id="stc:str1762"/>
<dbReference type="HOGENOM" id="CLU_011252_2_1_9"/>
<dbReference type="GO" id="GO:0005524">
    <property type="term" value="F:ATP binding"/>
    <property type="evidence" value="ECO:0007669"/>
    <property type="project" value="UniProtKB-UniRule"/>
</dbReference>
<dbReference type="GO" id="GO:0016887">
    <property type="term" value="F:ATP hydrolysis activity"/>
    <property type="evidence" value="ECO:0007669"/>
    <property type="project" value="InterPro"/>
</dbReference>
<dbReference type="GO" id="GO:0140664">
    <property type="term" value="F:ATP-dependent DNA damage sensor activity"/>
    <property type="evidence" value="ECO:0007669"/>
    <property type="project" value="InterPro"/>
</dbReference>
<dbReference type="GO" id="GO:0004519">
    <property type="term" value="F:endonuclease activity"/>
    <property type="evidence" value="ECO:0007669"/>
    <property type="project" value="UniProtKB-UniRule"/>
</dbReference>
<dbReference type="GO" id="GO:0030983">
    <property type="term" value="F:mismatched DNA binding"/>
    <property type="evidence" value="ECO:0007669"/>
    <property type="project" value="InterPro"/>
</dbReference>
<dbReference type="GO" id="GO:0043023">
    <property type="term" value="F:ribosomal large subunit binding"/>
    <property type="evidence" value="ECO:0007669"/>
    <property type="project" value="UniProtKB-UniRule"/>
</dbReference>
<dbReference type="GO" id="GO:0019843">
    <property type="term" value="F:rRNA binding"/>
    <property type="evidence" value="ECO:0007669"/>
    <property type="project" value="UniProtKB-UniRule"/>
</dbReference>
<dbReference type="GO" id="GO:0006298">
    <property type="term" value="P:mismatch repair"/>
    <property type="evidence" value="ECO:0007669"/>
    <property type="project" value="InterPro"/>
</dbReference>
<dbReference type="GO" id="GO:0045910">
    <property type="term" value="P:negative regulation of DNA recombination"/>
    <property type="evidence" value="ECO:0007669"/>
    <property type="project" value="InterPro"/>
</dbReference>
<dbReference type="GO" id="GO:0072344">
    <property type="term" value="P:rescue of stalled ribosome"/>
    <property type="evidence" value="ECO:0007669"/>
    <property type="project" value="UniProtKB-UniRule"/>
</dbReference>
<dbReference type="CDD" id="cd03280">
    <property type="entry name" value="ABC_MutS2"/>
    <property type="match status" value="1"/>
</dbReference>
<dbReference type="FunFam" id="3.30.1370.110:FF:000004">
    <property type="entry name" value="Endonuclease MutS2"/>
    <property type="match status" value="1"/>
</dbReference>
<dbReference type="FunFam" id="3.40.50.300:FF:000830">
    <property type="entry name" value="Endonuclease MutS2"/>
    <property type="match status" value="1"/>
</dbReference>
<dbReference type="Gene3D" id="3.30.1370.110">
    <property type="match status" value="1"/>
</dbReference>
<dbReference type="Gene3D" id="3.40.50.300">
    <property type="entry name" value="P-loop containing nucleotide triphosphate hydrolases"/>
    <property type="match status" value="1"/>
</dbReference>
<dbReference type="HAMAP" id="MF_00092">
    <property type="entry name" value="MutS2"/>
    <property type="match status" value="1"/>
</dbReference>
<dbReference type="InterPro" id="IPR000432">
    <property type="entry name" value="DNA_mismatch_repair_MutS_C"/>
</dbReference>
<dbReference type="InterPro" id="IPR007696">
    <property type="entry name" value="DNA_mismatch_repair_MutS_core"/>
</dbReference>
<dbReference type="InterPro" id="IPR036187">
    <property type="entry name" value="DNA_mismatch_repair_MutS_sf"/>
</dbReference>
<dbReference type="InterPro" id="IPR046893">
    <property type="entry name" value="MSSS"/>
</dbReference>
<dbReference type="InterPro" id="IPR045076">
    <property type="entry name" value="MutS"/>
</dbReference>
<dbReference type="InterPro" id="IPR005747">
    <property type="entry name" value="MutS2"/>
</dbReference>
<dbReference type="InterPro" id="IPR027417">
    <property type="entry name" value="P-loop_NTPase"/>
</dbReference>
<dbReference type="InterPro" id="IPR002625">
    <property type="entry name" value="Smr_dom"/>
</dbReference>
<dbReference type="InterPro" id="IPR036063">
    <property type="entry name" value="Smr_dom_sf"/>
</dbReference>
<dbReference type="NCBIfam" id="TIGR01069">
    <property type="entry name" value="mutS2"/>
    <property type="match status" value="1"/>
</dbReference>
<dbReference type="PANTHER" id="PTHR48466:SF2">
    <property type="entry name" value="OS10G0509000 PROTEIN"/>
    <property type="match status" value="1"/>
</dbReference>
<dbReference type="PANTHER" id="PTHR48466">
    <property type="entry name" value="OS10G0509000 PROTEIN-RELATED"/>
    <property type="match status" value="1"/>
</dbReference>
<dbReference type="Pfam" id="PF20297">
    <property type="entry name" value="MSSS"/>
    <property type="match status" value="1"/>
</dbReference>
<dbReference type="Pfam" id="PF00488">
    <property type="entry name" value="MutS_V"/>
    <property type="match status" value="1"/>
</dbReference>
<dbReference type="Pfam" id="PF01713">
    <property type="entry name" value="Smr"/>
    <property type="match status" value="1"/>
</dbReference>
<dbReference type="PIRSF" id="PIRSF005814">
    <property type="entry name" value="MutS_YshD"/>
    <property type="match status" value="1"/>
</dbReference>
<dbReference type="SMART" id="SM00534">
    <property type="entry name" value="MUTSac"/>
    <property type="match status" value="1"/>
</dbReference>
<dbReference type="SMART" id="SM00533">
    <property type="entry name" value="MUTSd"/>
    <property type="match status" value="1"/>
</dbReference>
<dbReference type="SMART" id="SM00463">
    <property type="entry name" value="SMR"/>
    <property type="match status" value="1"/>
</dbReference>
<dbReference type="SUPFAM" id="SSF48334">
    <property type="entry name" value="DNA repair protein MutS, domain III"/>
    <property type="match status" value="1"/>
</dbReference>
<dbReference type="SUPFAM" id="SSF52540">
    <property type="entry name" value="P-loop containing nucleoside triphosphate hydrolases"/>
    <property type="match status" value="1"/>
</dbReference>
<dbReference type="SUPFAM" id="SSF160443">
    <property type="entry name" value="SMR domain-like"/>
    <property type="match status" value="1"/>
</dbReference>
<dbReference type="PROSITE" id="PS00486">
    <property type="entry name" value="DNA_MISMATCH_REPAIR_2"/>
    <property type="match status" value="1"/>
</dbReference>
<dbReference type="PROSITE" id="PS50828">
    <property type="entry name" value="SMR"/>
    <property type="match status" value="1"/>
</dbReference>
<evidence type="ECO:0000255" key="1">
    <source>
        <dbReference type="HAMAP-Rule" id="MF_00092"/>
    </source>
</evidence>
<sequence length="783" mass="88024">MNTKILDQLEFNKVKDQFTEYLQTEQAQAELCDLVPMTNPERIQNQFTEIQEMSEIFVEHHGFAIGSLRDISEPLRRLELDADLNIQELIAIKKVLQASADLSRFYADLENVELIALKRLFEKIEAFPSLQGSLQSINDGGFIEHFASPELQNIRRQLKACDDAIRQTLQDILKKSGHMLAENLIASRNGRSVLPVKNTYRNRIAGVVHDISSSGNTVYIEPRAVIQLNEKITQLRADERHEMARILHELSDQLRPHTAAIANNAWILGHMDFIRGKYLYLHDKKAIIPEISDNQTLQLLNVRHPLLINPVANDLRFDEDLTVIVITGPNTGGKTVMLKTLGLAQLMAQSGLPILADKGSRVAIFQEIFADIGDEQSIEQSLSTFSSHMTHIVEILNTADSNSLVLVDELGAGTDPQEGASLAMAILEHLRLSQIKTMATTHYPELKAYGIETQHVENASMEFDTATLRPTYRFMQGVPGRSNAFEIARRLGLNEIIVKEAENLTDTDSDVNRIIEQLEAQTVETQKRLEHIKDVEQENLKFNRAVKKLYNEFSHEYDKELEKAQKEIQEMVDTALAESDSILKNLHDKSQLKPHEVIDAKGKLKKLAAQVDLSKNKVLRKAKKEKAARAPRVGDDIIVTAYGQRGTLTSQAKNGNWEAQVGLIKMSLKADEFTLVRTQAEAQQPKKKQINVVKKAKKTSSDGPRARLDLRGKRYEEAMQELDAFIDQALLNNMSQVEIIHGIGTGVIRDAVTKYLRRHRHVKNFEYAPQSAGGSGCTIATLG</sequence>
<organism>
    <name type="scientific">Streptococcus thermophilus (strain CNRZ 1066)</name>
    <dbReference type="NCBI Taxonomy" id="299768"/>
    <lineage>
        <taxon>Bacteria</taxon>
        <taxon>Bacillati</taxon>
        <taxon>Bacillota</taxon>
        <taxon>Bacilli</taxon>
        <taxon>Lactobacillales</taxon>
        <taxon>Streptococcaceae</taxon>
        <taxon>Streptococcus</taxon>
    </lineage>
</organism>
<name>MUTS2_STRT1</name>
<comment type="function">
    <text evidence="1">Endonuclease that is involved in the suppression of homologous recombination and thus may have a key role in the control of bacterial genetic diversity.</text>
</comment>
<comment type="function">
    <text evidence="1">Acts as a ribosome collision sensor, splitting the ribosome into its 2 subunits. Detects stalled/collided 70S ribosomes which it binds and splits by an ATP-hydrolysis driven conformational change. Acts upstream of the ribosome quality control system (RQC), a ribosome-associated complex that mediates the extraction of incompletely synthesized nascent chains from stalled ribosomes and their subsequent degradation. Probably generates substrates for RQC.</text>
</comment>
<comment type="subunit">
    <text evidence="1">Homodimer. Binds to stalled ribosomes, contacting rRNA.</text>
</comment>
<comment type="similarity">
    <text evidence="1">Belongs to the DNA mismatch repair MutS family. MutS2 subfamily.</text>
</comment>
<gene>
    <name evidence="1" type="primary">mutS2</name>
    <name evidence="1" type="synonym">rqcU</name>
    <name type="ordered locus">str1762</name>
</gene>